<gene>
    <name type="primary">slx1</name>
    <name type="ORF">Pc21g15940</name>
</gene>
<organism>
    <name type="scientific">Penicillium rubens (strain ATCC 28089 / DSM 1075 / NRRL 1951 / Wisconsin 54-1255)</name>
    <name type="common">Penicillium chrysogenum</name>
    <dbReference type="NCBI Taxonomy" id="500485"/>
    <lineage>
        <taxon>Eukaryota</taxon>
        <taxon>Fungi</taxon>
        <taxon>Dikarya</taxon>
        <taxon>Ascomycota</taxon>
        <taxon>Pezizomycotina</taxon>
        <taxon>Eurotiomycetes</taxon>
        <taxon>Eurotiomycetidae</taxon>
        <taxon>Eurotiales</taxon>
        <taxon>Aspergillaceae</taxon>
        <taxon>Penicillium</taxon>
        <taxon>Penicillium chrysogenum species complex</taxon>
    </lineage>
</organism>
<name>SLX1_PENRW</name>
<keyword id="KW-0227">DNA damage</keyword>
<keyword id="KW-0233">DNA recombination</keyword>
<keyword id="KW-0234">DNA repair</keyword>
<keyword id="KW-0255">Endonuclease</keyword>
<keyword id="KW-0378">Hydrolase</keyword>
<keyword id="KW-0479">Metal-binding</keyword>
<keyword id="KW-0540">Nuclease</keyword>
<keyword id="KW-0539">Nucleus</keyword>
<keyword id="KW-1185">Reference proteome</keyword>
<keyword id="KW-0862">Zinc</keyword>
<keyword id="KW-0863">Zinc-finger</keyword>
<proteinExistence type="inferred from homology"/>
<evidence type="ECO:0000255" key="1">
    <source>
        <dbReference type="HAMAP-Rule" id="MF_03100"/>
    </source>
</evidence>
<evidence type="ECO:0000256" key="2">
    <source>
        <dbReference type="SAM" id="MobiDB-lite"/>
    </source>
</evidence>
<comment type="function">
    <text evidence="1">Catalytic subunit of the slx1-slx4 structure-specific endonuclease that resolves DNA secondary structures generated during DNA repair and recombination. Has endonuclease activity towards branched DNA substrates, introducing single-strand cuts in duplex DNA close to junctions with ss-DNA.</text>
</comment>
<comment type="cofactor">
    <cofactor evidence="1">
        <name>a divalent metal cation</name>
        <dbReference type="ChEBI" id="CHEBI:60240"/>
    </cofactor>
</comment>
<comment type="subunit">
    <text evidence="1">Forms a heterodimer with slx4.</text>
</comment>
<comment type="subcellular location">
    <subcellularLocation>
        <location evidence="1">Nucleus</location>
    </subcellularLocation>
</comment>
<comment type="similarity">
    <text evidence="1">Belongs to the SLX1 family.</text>
</comment>
<protein>
    <recommendedName>
        <fullName evidence="1">Structure-specific endonuclease subunit slx1</fullName>
        <ecNumber evidence="1">3.1.-.-</ecNumber>
    </recommendedName>
</protein>
<feature type="chain" id="PRO_0000383792" description="Structure-specific endonuclease subunit slx1">
    <location>
        <begin position="1"/>
        <end position="403"/>
    </location>
</feature>
<feature type="domain" description="GIY-YIG" evidence="1">
    <location>
        <begin position="12"/>
        <end position="94"/>
    </location>
</feature>
<feature type="zinc finger region" description="SLX1-type" evidence="1">
    <location>
        <begin position="235"/>
        <end position="290"/>
    </location>
</feature>
<feature type="region of interest" description="Disordered" evidence="2">
    <location>
        <begin position="91"/>
        <end position="126"/>
    </location>
</feature>
<feature type="region of interest" description="Disordered" evidence="2">
    <location>
        <begin position="321"/>
        <end position="403"/>
    </location>
</feature>
<feature type="compositionally biased region" description="Basic residues" evidence="2">
    <location>
        <begin position="116"/>
        <end position="126"/>
    </location>
</feature>
<feature type="compositionally biased region" description="Acidic residues" evidence="2">
    <location>
        <begin position="362"/>
        <end position="371"/>
    </location>
</feature>
<feature type="compositionally biased region" description="Acidic residues" evidence="2">
    <location>
        <begin position="390"/>
        <end position="403"/>
    </location>
</feature>
<reference key="1">
    <citation type="journal article" date="2008" name="Nat. Biotechnol.">
        <title>Genome sequencing and analysis of the filamentous fungus Penicillium chrysogenum.</title>
        <authorList>
            <person name="van den Berg M.A."/>
            <person name="Albang R."/>
            <person name="Albermann K."/>
            <person name="Badger J.H."/>
            <person name="Daran J.-M."/>
            <person name="Driessen A.J.M."/>
            <person name="Garcia-Estrada C."/>
            <person name="Fedorova N.D."/>
            <person name="Harris D.M."/>
            <person name="Heijne W.H.M."/>
            <person name="Joardar V.S."/>
            <person name="Kiel J.A.K.W."/>
            <person name="Kovalchuk A."/>
            <person name="Martin J.F."/>
            <person name="Nierman W.C."/>
            <person name="Nijland J.G."/>
            <person name="Pronk J.T."/>
            <person name="Roubos J.A."/>
            <person name="van der Klei I.J."/>
            <person name="van Peij N.N.M.E."/>
            <person name="Veenhuis M."/>
            <person name="von Doehren H."/>
            <person name="Wagner C."/>
            <person name="Wortman J.R."/>
            <person name="Bovenberg R.A.L."/>
        </authorList>
    </citation>
    <scope>NUCLEOTIDE SEQUENCE [LARGE SCALE GENOMIC DNA]</scope>
    <source>
        <strain>ATCC 28089 / DSM 1075 / NRRL 1951 / Wisconsin 54-1255</strain>
    </source>
</reference>
<dbReference type="EC" id="3.1.-.-" evidence="1"/>
<dbReference type="EMBL" id="AM920436">
    <property type="protein sequence ID" value="CAP96491.1"/>
    <property type="molecule type" value="Genomic_DNA"/>
</dbReference>
<dbReference type="RefSeq" id="XP_002568603.1">
    <property type="nucleotide sequence ID" value="XM_002568557.1"/>
</dbReference>
<dbReference type="SMR" id="B6HK90"/>
<dbReference type="STRING" id="500485.B6HK90"/>
<dbReference type="GeneID" id="8309813"/>
<dbReference type="KEGG" id="pcs:N7525_008126"/>
<dbReference type="VEuPathDB" id="FungiDB:PCH_Pc21g15940"/>
<dbReference type="eggNOG" id="KOG3005">
    <property type="taxonomic scope" value="Eukaryota"/>
</dbReference>
<dbReference type="HOGENOM" id="CLU_030739_1_0_1"/>
<dbReference type="OMA" id="HNRGCDF"/>
<dbReference type="OrthoDB" id="24645at2759"/>
<dbReference type="BioCyc" id="PCHR:PC21G15940-MONOMER"/>
<dbReference type="Proteomes" id="UP000000724">
    <property type="component" value="Contig Pc00c21"/>
</dbReference>
<dbReference type="GO" id="GO:0033557">
    <property type="term" value="C:Slx1-Slx4 complex"/>
    <property type="evidence" value="ECO:0007669"/>
    <property type="project" value="UniProtKB-UniRule"/>
</dbReference>
<dbReference type="GO" id="GO:0017108">
    <property type="term" value="F:5'-flap endonuclease activity"/>
    <property type="evidence" value="ECO:0007669"/>
    <property type="project" value="InterPro"/>
</dbReference>
<dbReference type="GO" id="GO:0008821">
    <property type="term" value="F:crossover junction DNA endonuclease activity"/>
    <property type="evidence" value="ECO:0007669"/>
    <property type="project" value="TreeGrafter"/>
</dbReference>
<dbReference type="GO" id="GO:0008270">
    <property type="term" value="F:zinc ion binding"/>
    <property type="evidence" value="ECO:0007669"/>
    <property type="project" value="UniProtKB-KW"/>
</dbReference>
<dbReference type="GO" id="GO:0000724">
    <property type="term" value="P:double-strand break repair via homologous recombination"/>
    <property type="evidence" value="ECO:0007669"/>
    <property type="project" value="TreeGrafter"/>
</dbReference>
<dbReference type="CDD" id="cd10455">
    <property type="entry name" value="GIY-YIG_SLX1"/>
    <property type="match status" value="1"/>
</dbReference>
<dbReference type="FunFam" id="3.40.1440.10:FF:000006">
    <property type="entry name" value="Structure-specific endonuclease subunit SLX1"/>
    <property type="match status" value="1"/>
</dbReference>
<dbReference type="Gene3D" id="3.40.1440.10">
    <property type="entry name" value="GIY-YIG endonuclease"/>
    <property type="match status" value="1"/>
</dbReference>
<dbReference type="Gene3D" id="3.30.40.10">
    <property type="entry name" value="Zinc/RING finger domain, C3HC4 (zinc finger)"/>
    <property type="match status" value="1"/>
</dbReference>
<dbReference type="HAMAP" id="MF_03100">
    <property type="entry name" value="Endonuc_su_Slx1"/>
    <property type="match status" value="1"/>
</dbReference>
<dbReference type="InterPro" id="IPR000305">
    <property type="entry name" value="GIY-YIG_endonuc"/>
</dbReference>
<dbReference type="InterPro" id="IPR035901">
    <property type="entry name" value="GIY-YIG_endonuc_sf"/>
</dbReference>
<dbReference type="InterPro" id="IPR027520">
    <property type="entry name" value="Slx1"/>
</dbReference>
<dbReference type="InterPro" id="IPR048749">
    <property type="entry name" value="SLX1_C"/>
</dbReference>
<dbReference type="InterPro" id="IPR050381">
    <property type="entry name" value="SLX1_endonuclease"/>
</dbReference>
<dbReference type="InterPro" id="IPR013083">
    <property type="entry name" value="Znf_RING/FYVE/PHD"/>
</dbReference>
<dbReference type="PANTHER" id="PTHR20208">
    <property type="entry name" value="STRUCTURE-SPECIFIC ENDONUCLEASE SUBUNIT SLX1"/>
    <property type="match status" value="1"/>
</dbReference>
<dbReference type="PANTHER" id="PTHR20208:SF10">
    <property type="entry name" value="STRUCTURE-SPECIFIC ENDONUCLEASE SUBUNIT SLX1"/>
    <property type="match status" value="1"/>
</dbReference>
<dbReference type="Pfam" id="PF01541">
    <property type="entry name" value="GIY-YIG"/>
    <property type="match status" value="1"/>
</dbReference>
<dbReference type="Pfam" id="PF21202">
    <property type="entry name" value="SLX1_C"/>
    <property type="match status" value="1"/>
</dbReference>
<dbReference type="PROSITE" id="PS50164">
    <property type="entry name" value="GIY_YIG"/>
    <property type="match status" value="1"/>
</dbReference>
<sequence>MEEFEKPKPIPAYYCCYLLRSTVRHASLYIGSTPNPIRRLPQHNGVAKGGAKRTARDKLRPWEMTLVVEGFTSRVGALQFEWAWQHPERSRHLDSDDDLDSKPQAKANANADAKTGKPKSKPRARTRRSLMAHLEDLHSLLRSTYFSSWPLRVRFFCADVYRVWRAWNDRVDSRLPDMIKVILDGDNLATAPDTNQRDGHAPVGNINNLSIDYTRLEDHLEKSMFMLDDPDDLQCTVCKESISPNEEQIVVCPHPNCRGTSHLLCLSTKFLDATNETDLLVPTQGTCPSCGNTVQWVTMMRELSLRNRAEKEARAILRKKEKRVRKESAAMEGSSVPRSSSTEPRSLLEEPTQDDLGPNWFEEVDIESDSDVEGRQKHRSTQPPSKLEIVIEDSDWDDAELIE</sequence>
<accession>B6HK90</accession>